<proteinExistence type="evidence at protein level"/>
<accession>Q8NI36</accession>
<accession>A0A0A0MTB8</accession>
<accession>A2RUS4</accession>
<accession>Q68E02</accession>
<accession>Q8N1Q2</accession>
<dbReference type="EMBL" id="AF385437">
    <property type="protein sequence ID" value="AAM43838.1"/>
    <property type="status" value="ALT_INIT"/>
    <property type="molecule type" value="mRNA"/>
</dbReference>
<dbReference type="EMBL" id="BC133025">
    <property type="protein sequence ID" value="AAI33026.1"/>
    <property type="status" value="ALT_INIT"/>
    <property type="molecule type" value="mRNA"/>
</dbReference>
<dbReference type="EMBL" id="BC136517">
    <property type="protein sequence ID" value="AAI36518.1"/>
    <property type="status" value="ALT_INIT"/>
    <property type="molecule type" value="mRNA"/>
</dbReference>
<dbReference type="EMBL" id="AK095312">
    <property type="protein sequence ID" value="BAC04527.1"/>
    <property type="molecule type" value="mRNA"/>
</dbReference>
<dbReference type="EMBL" id="CR749211">
    <property type="protein sequence ID" value="CAH18068.1"/>
    <property type="molecule type" value="mRNA"/>
</dbReference>
<dbReference type="EMBL" id="AC008572">
    <property type="status" value="NOT_ANNOTATED_CDS"/>
    <property type="molecule type" value="Genomic_DNA"/>
</dbReference>
<dbReference type="EMBL" id="KF510258">
    <property type="status" value="NOT_ANNOTATED_CDS"/>
    <property type="molecule type" value="Genomic_DNA"/>
</dbReference>
<dbReference type="EMBL" id="KF510878">
    <property type="status" value="NOT_ANNOTATED_CDS"/>
    <property type="molecule type" value="Genomic_DNA"/>
</dbReference>
<dbReference type="RefSeq" id="NP_644810.1">
    <property type="nucleotide sequence ID" value="NM_139281.2"/>
</dbReference>
<dbReference type="PDB" id="7MQ8">
    <property type="method" value="EM"/>
    <property type="resolution" value="3.60 A"/>
    <property type="chains" value="LT=1-895"/>
</dbReference>
<dbReference type="PDB" id="7MQ9">
    <property type="method" value="EM"/>
    <property type="resolution" value="3.87 A"/>
    <property type="chains" value="LT=1-895"/>
</dbReference>
<dbReference type="PDB" id="7MQA">
    <property type="method" value="EM"/>
    <property type="resolution" value="2.70 A"/>
    <property type="chains" value="LT=1-895"/>
</dbReference>
<dbReference type="PDBsum" id="7MQ8"/>
<dbReference type="PDBsum" id="7MQ9"/>
<dbReference type="PDBsum" id="7MQA"/>
<dbReference type="EMDB" id="EMD-23936"/>
<dbReference type="EMDB" id="EMD-23937"/>
<dbReference type="EMDB" id="EMD-23938"/>
<dbReference type="SMR" id="Q8NI36"/>
<dbReference type="BioGRID" id="126399">
    <property type="interactions" value="257"/>
</dbReference>
<dbReference type="ComplexPortal" id="CPX-2688">
    <property type="entry name" value="UTP-B complex"/>
</dbReference>
<dbReference type="FunCoup" id="Q8NI36">
    <property type="interactions" value="2527"/>
</dbReference>
<dbReference type="IntAct" id="Q8NI36">
    <property type="interactions" value="86"/>
</dbReference>
<dbReference type="MINT" id="Q8NI36"/>
<dbReference type="STRING" id="9606.ENSP00000423067"/>
<dbReference type="GlyCosmos" id="Q8NI36">
    <property type="glycosylation" value="1 site, 1 glycan"/>
</dbReference>
<dbReference type="GlyGen" id="Q8NI36">
    <property type="glycosylation" value="1 site, 1 O-linked glycan (1 site)"/>
</dbReference>
<dbReference type="iPTMnet" id="Q8NI36"/>
<dbReference type="PhosphoSitePlus" id="Q8NI36"/>
<dbReference type="SwissPalm" id="Q8NI36"/>
<dbReference type="BioMuta" id="WDR36"/>
<dbReference type="DMDM" id="46577504"/>
<dbReference type="jPOST" id="Q8NI36"/>
<dbReference type="MassIVE" id="Q8NI36"/>
<dbReference type="PaxDb" id="9606-ENSP00000423067"/>
<dbReference type="PeptideAtlas" id="Q8NI36"/>
<dbReference type="ProteomicsDB" id="73827"/>
<dbReference type="Pumba" id="Q8NI36"/>
<dbReference type="Antibodypedia" id="25310">
    <property type="antibodies" value="49 antibodies from 18 providers"/>
</dbReference>
<dbReference type="DNASU" id="134430"/>
<dbReference type="GeneID" id="134430"/>
<dbReference type="KEGG" id="hsa:134430"/>
<dbReference type="MANE-Select" id="ENST00000513710.4">
    <property type="protein sequence ID" value="ENSP00000424628.3"/>
    <property type="RefSeq nucleotide sequence ID" value="NM_139281.3"/>
    <property type="RefSeq protein sequence ID" value="NP_644810.2"/>
</dbReference>
<dbReference type="UCSC" id="uc003kpd.3">
    <property type="organism name" value="human"/>
</dbReference>
<dbReference type="AGR" id="HGNC:30696"/>
<dbReference type="CTD" id="134430"/>
<dbReference type="DisGeNET" id="134430"/>
<dbReference type="GeneCards" id="WDR36"/>
<dbReference type="HGNC" id="HGNC:30696">
    <property type="gene designation" value="WDR36"/>
</dbReference>
<dbReference type="MalaCards" id="WDR36"/>
<dbReference type="MIM" id="609669">
    <property type="type" value="gene"/>
</dbReference>
<dbReference type="MIM" id="609887">
    <property type="type" value="phenotype"/>
</dbReference>
<dbReference type="neXtProt" id="NX_Q8NI36"/>
<dbReference type="PharmGKB" id="PA134933637"/>
<dbReference type="VEuPathDB" id="HostDB:ENSG00000134987"/>
<dbReference type="eggNOG" id="KOG1539">
    <property type="taxonomic scope" value="Eukaryota"/>
</dbReference>
<dbReference type="GeneTree" id="ENSGT00940000153662"/>
<dbReference type="HOGENOM" id="CLU_002774_2_0_1"/>
<dbReference type="InParanoid" id="Q8NI36"/>
<dbReference type="OrthoDB" id="10250769at2759"/>
<dbReference type="PAN-GO" id="Q8NI36">
    <property type="GO annotations" value="3 GO annotations based on evolutionary models"/>
</dbReference>
<dbReference type="PhylomeDB" id="Q8NI36"/>
<dbReference type="TreeFam" id="TF300606"/>
<dbReference type="PathwayCommons" id="Q8NI36"/>
<dbReference type="Reactome" id="R-HSA-6790901">
    <property type="pathway name" value="rRNA modification in the nucleus and cytosol"/>
</dbReference>
<dbReference type="Reactome" id="R-HSA-6791226">
    <property type="pathway name" value="Major pathway of rRNA processing in the nucleolus and cytosol"/>
</dbReference>
<dbReference type="SignaLink" id="Q8NI36"/>
<dbReference type="BioGRID-ORCS" id="134430">
    <property type="hits" value="432 hits in 1163 CRISPR screens"/>
</dbReference>
<dbReference type="CD-CODE" id="91857CE7">
    <property type="entry name" value="Nucleolus"/>
</dbReference>
<dbReference type="ChiTaRS" id="WDR36">
    <property type="organism name" value="human"/>
</dbReference>
<dbReference type="GeneWiki" id="WDR36"/>
<dbReference type="GenomeRNAi" id="134430"/>
<dbReference type="Pharos" id="Q8NI36">
    <property type="development level" value="Tbio"/>
</dbReference>
<dbReference type="PRO" id="PR:Q8NI36"/>
<dbReference type="Proteomes" id="UP000005640">
    <property type="component" value="Chromosome 5"/>
</dbReference>
<dbReference type="RNAct" id="Q8NI36">
    <property type="molecule type" value="protein"/>
</dbReference>
<dbReference type="Bgee" id="ENSG00000134987">
    <property type="expression patterns" value="Expressed in calcaneal tendon and 185 other cell types or tissues"/>
</dbReference>
<dbReference type="ExpressionAtlas" id="Q8NI36">
    <property type="expression patterns" value="baseline and differential"/>
</dbReference>
<dbReference type="GO" id="GO:0005654">
    <property type="term" value="C:nucleoplasm"/>
    <property type="evidence" value="ECO:0000304"/>
    <property type="project" value="Reactome"/>
</dbReference>
<dbReference type="GO" id="GO:0034388">
    <property type="term" value="C:Pwp2p-containing subcomplex of 90S preribosome"/>
    <property type="evidence" value="ECO:0000318"/>
    <property type="project" value="GO_Central"/>
</dbReference>
<dbReference type="GO" id="GO:0032040">
    <property type="term" value="C:small-subunit processome"/>
    <property type="evidence" value="ECO:0000314"/>
    <property type="project" value="UniProtKB"/>
</dbReference>
<dbReference type="GO" id="GO:0003723">
    <property type="term" value="F:RNA binding"/>
    <property type="evidence" value="ECO:0007005"/>
    <property type="project" value="UniProtKB"/>
</dbReference>
<dbReference type="GO" id="GO:0042274">
    <property type="term" value="P:ribosomal small subunit biogenesis"/>
    <property type="evidence" value="ECO:0000314"/>
    <property type="project" value="UniProtKB"/>
</dbReference>
<dbReference type="GO" id="GO:0006364">
    <property type="term" value="P:rRNA processing"/>
    <property type="evidence" value="ECO:0000318"/>
    <property type="project" value="GO_Central"/>
</dbReference>
<dbReference type="GO" id="GO:0007601">
    <property type="term" value="P:visual perception"/>
    <property type="evidence" value="ECO:0007669"/>
    <property type="project" value="UniProtKB-KW"/>
</dbReference>
<dbReference type="FunFam" id="2.130.10.10:FF:000109">
    <property type="entry name" value="WD repeat domain 36"/>
    <property type="match status" value="1"/>
</dbReference>
<dbReference type="FunFam" id="2.130.10.10:FF:000139">
    <property type="entry name" value="WD repeat domain 36"/>
    <property type="match status" value="1"/>
</dbReference>
<dbReference type="Gene3D" id="2.130.10.10">
    <property type="entry name" value="YVTN repeat-like/Quinoprotein amine dehydrogenase"/>
    <property type="match status" value="2"/>
</dbReference>
<dbReference type="InterPro" id="IPR007319">
    <property type="entry name" value="SSU_processome_Utp21"/>
</dbReference>
<dbReference type="InterPro" id="IPR015943">
    <property type="entry name" value="WD40/YVTN_repeat-like_dom_sf"/>
</dbReference>
<dbReference type="InterPro" id="IPR019775">
    <property type="entry name" value="WD40_repeat_CS"/>
</dbReference>
<dbReference type="InterPro" id="IPR036322">
    <property type="entry name" value="WD40_repeat_dom_sf"/>
</dbReference>
<dbReference type="InterPro" id="IPR001680">
    <property type="entry name" value="WD40_rpt"/>
</dbReference>
<dbReference type="PANTHER" id="PTHR22840">
    <property type="entry name" value="WD REPEAT-CONTAINING PROTEIN 36"/>
    <property type="match status" value="1"/>
</dbReference>
<dbReference type="PANTHER" id="PTHR22840:SF12">
    <property type="entry name" value="WD REPEAT-CONTAINING PROTEIN 36"/>
    <property type="match status" value="1"/>
</dbReference>
<dbReference type="Pfam" id="PF25171">
    <property type="entry name" value="Beta-prop_WDR36-Utp21_1st"/>
    <property type="match status" value="1"/>
</dbReference>
<dbReference type="Pfam" id="PF25168">
    <property type="entry name" value="Beta-prop_WDR36-Utp21_2nd"/>
    <property type="match status" value="1"/>
</dbReference>
<dbReference type="Pfam" id="PF04192">
    <property type="entry name" value="Utp21"/>
    <property type="match status" value="1"/>
</dbReference>
<dbReference type="SMART" id="SM00320">
    <property type="entry name" value="WD40"/>
    <property type="match status" value="8"/>
</dbReference>
<dbReference type="SUPFAM" id="SSF50978">
    <property type="entry name" value="WD40 repeat-like"/>
    <property type="match status" value="2"/>
</dbReference>
<dbReference type="PROSITE" id="PS00678">
    <property type="entry name" value="WD_REPEATS_1"/>
    <property type="match status" value="1"/>
</dbReference>
<dbReference type="PROSITE" id="PS50082">
    <property type="entry name" value="WD_REPEATS_2"/>
    <property type="match status" value="3"/>
</dbReference>
<dbReference type="PROSITE" id="PS50294">
    <property type="entry name" value="WD_REPEATS_REGION"/>
    <property type="match status" value="1"/>
</dbReference>
<name>WDR36_HUMAN</name>
<comment type="function">
    <text evidence="3 6 8">Part of the small subunit (SSU) processome, first precursor of the small eukaryotic ribosomal subunit. During the assembly of the SSU processome in the nucleolus, many ribosome biogenesis factors, an RNA chaperone and ribosomal proteins associate with the nascent pre-rRNA and work in concert to generate RNA folding, modifications, rearrangements and cleavage as well as targeted degradation of pre-ribosomal RNA by the RNA exosome. Involved in the nucleolar processing of SSU 18S rRNA (PubMed:21051332, PubMed:34516797). Involved in T-cell activation and highly coregulated with IL2 (PubMed:15177553).</text>
</comment>
<comment type="subunit">
    <text evidence="8">Part of the small subunit (SSU) processome, composed of more than 70 proteins and the RNA chaperone small nucleolar RNA (snoRNA) U3.</text>
</comment>
<comment type="subcellular location">
    <subcellularLocation>
        <location evidence="6 7 8">Nucleus</location>
        <location evidence="6 7 8">Nucleolus</location>
    </subcellularLocation>
</comment>
<comment type="tissue specificity">
    <text evidence="4">Expressed in heart, placenta, liver, skeletal muscle, kidney and pancreas. In ocular tissues, strong expression in iris, sclera, ciliary muscle, ciliary body, retina and optic nerve.</text>
</comment>
<comment type="domain">
    <text evidence="1">The WD repeats are grouped into two tandem seven-bladed beta-propeller regions.</text>
</comment>
<comment type="disease" evidence="4 5">
    <disease id="DI-00939">
        <name>Glaucoma 1, open angle, G</name>
        <acronym>GLC1G</acronym>
        <description>A form of primary open angle glaucoma (POAG). POAG is characterized by a specific pattern of optic nerve and visual field defects. The angle of the anterior chamber of the eye is open, and usually the intraocular pressure is increased. However, glaucoma can occur at any intraocular pressure. The disease is generally asymptomatic until the late stages, by which time significant and irreversible optic nerve damage has already taken place.</description>
        <dbReference type="MIM" id="609887"/>
    </disease>
    <text>The disease is caused by variants affecting the gene represented in this entry.</text>
</comment>
<comment type="miscellaneous">
    <text evidence="10">Depletion of WDR36 mRNA in cultured cells causes apoptotic cell death and consistently associates with a reduced 21S rRNA and delay of 18S rRNA maturation.</text>
</comment>
<comment type="sequence caution" evidence="9">
    <conflict type="erroneous initiation">
        <sequence resource="EMBL-CDS" id="AAI33026"/>
    </conflict>
    <text>Extended N-terminus.</text>
</comment>
<comment type="sequence caution" evidence="9">
    <conflict type="erroneous initiation">
        <sequence resource="EMBL-CDS" id="AAI36518"/>
    </conflict>
    <text>Extended N-terminus.</text>
</comment>
<comment type="sequence caution" evidence="9">
    <conflict type="erroneous initiation">
        <sequence resource="EMBL-CDS" id="AAM43838"/>
    </conflict>
    <text>Extended N-terminus.</text>
</comment>
<keyword id="KW-0002">3D-structure</keyword>
<keyword id="KW-0225">Disease variant</keyword>
<keyword id="KW-0955">Glaucoma</keyword>
<keyword id="KW-0539">Nucleus</keyword>
<keyword id="KW-0597">Phosphoprotein</keyword>
<keyword id="KW-1267">Proteomics identification</keyword>
<keyword id="KW-1185">Reference proteome</keyword>
<keyword id="KW-0677">Repeat</keyword>
<keyword id="KW-0690">Ribosome biogenesis</keyword>
<keyword id="KW-0698">rRNA processing</keyword>
<keyword id="KW-0716">Sensory transduction</keyword>
<keyword id="KW-0844">Vision</keyword>
<keyword id="KW-0853">WD repeat</keyword>
<evidence type="ECO:0000250" key="1"/>
<evidence type="ECO:0000269" key="2">
    <source>
    </source>
</evidence>
<evidence type="ECO:0000269" key="3">
    <source>
    </source>
</evidence>
<evidence type="ECO:0000269" key="4">
    <source>
    </source>
</evidence>
<evidence type="ECO:0000269" key="5">
    <source>
    </source>
</evidence>
<evidence type="ECO:0000269" key="6">
    <source>
    </source>
</evidence>
<evidence type="ECO:0000269" key="7">
    <source>
    </source>
</evidence>
<evidence type="ECO:0000269" key="8">
    <source>
    </source>
</evidence>
<evidence type="ECO:0000305" key="9"/>
<evidence type="ECO:0000305" key="10">
    <source>
    </source>
</evidence>
<evidence type="ECO:0000312" key="11">
    <source>
        <dbReference type="HGNC" id="HGNC:30696"/>
    </source>
</evidence>
<evidence type="ECO:0007744" key="12">
    <source>
        <dbReference type="PDB" id="7MQ8"/>
    </source>
</evidence>
<evidence type="ECO:0007744" key="13">
    <source>
        <dbReference type="PDB" id="7MQ9"/>
    </source>
</evidence>
<evidence type="ECO:0007744" key="14">
    <source>
        <dbReference type="PDB" id="7MQA"/>
    </source>
</evidence>
<evidence type="ECO:0007744" key="15">
    <source>
    </source>
</evidence>
<reference key="1">
    <citation type="journal article" date="2004" name="Genomics">
        <title>T lymphocyte activation gene identification by coregulated expression on DNA microarrays.</title>
        <authorList>
            <person name="Mao M."/>
            <person name="Biery M.C."/>
            <person name="Kobayashi S.V."/>
            <person name="Ward T."/>
            <person name="Schimmack G."/>
            <person name="Burchard J."/>
            <person name="Schelter J.M."/>
            <person name="Dai H."/>
            <person name="He Y.D."/>
            <person name="Linsley P.S."/>
        </authorList>
    </citation>
    <scope>NUCLEOTIDE SEQUENCE [MRNA]</scope>
    <scope>FUNCTION</scope>
</reference>
<reference key="2">
    <citation type="journal article" date="2004" name="Genome Res.">
        <title>The status, quality, and expansion of the NIH full-length cDNA project: the Mammalian Gene Collection (MGC).</title>
        <authorList>
            <consortium name="The MGC Project Team"/>
        </authorList>
    </citation>
    <scope>NUCLEOTIDE SEQUENCE [LARGE SCALE MRNA]</scope>
</reference>
<reference key="3">
    <citation type="journal article" date="2004" name="Nat. Genet.">
        <title>Complete sequencing and characterization of 21,243 full-length human cDNAs.</title>
        <authorList>
            <person name="Ota T."/>
            <person name="Suzuki Y."/>
            <person name="Nishikawa T."/>
            <person name="Otsuki T."/>
            <person name="Sugiyama T."/>
            <person name="Irie R."/>
            <person name="Wakamatsu A."/>
            <person name="Hayashi K."/>
            <person name="Sato H."/>
            <person name="Nagai K."/>
            <person name="Kimura K."/>
            <person name="Makita H."/>
            <person name="Sekine M."/>
            <person name="Obayashi M."/>
            <person name="Nishi T."/>
            <person name="Shibahara T."/>
            <person name="Tanaka T."/>
            <person name="Ishii S."/>
            <person name="Yamamoto J."/>
            <person name="Saito K."/>
            <person name="Kawai Y."/>
            <person name="Isono Y."/>
            <person name="Nakamura Y."/>
            <person name="Nagahari K."/>
            <person name="Murakami K."/>
            <person name="Yasuda T."/>
            <person name="Iwayanagi T."/>
            <person name="Wagatsuma M."/>
            <person name="Shiratori A."/>
            <person name="Sudo H."/>
            <person name="Hosoiri T."/>
            <person name="Kaku Y."/>
            <person name="Kodaira H."/>
            <person name="Kondo H."/>
            <person name="Sugawara M."/>
            <person name="Takahashi M."/>
            <person name="Kanda K."/>
            <person name="Yokoi T."/>
            <person name="Furuya T."/>
            <person name="Kikkawa E."/>
            <person name="Omura Y."/>
            <person name="Abe K."/>
            <person name="Kamihara K."/>
            <person name="Katsuta N."/>
            <person name="Sato K."/>
            <person name="Tanikawa M."/>
            <person name="Yamazaki M."/>
            <person name="Ninomiya K."/>
            <person name="Ishibashi T."/>
            <person name="Yamashita H."/>
            <person name="Murakawa K."/>
            <person name="Fujimori K."/>
            <person name="Tanai H."/>
            <person name="Kimata M."/>
            <person name="Watanabe M."/>
            <person name="Hiraoka S."/>
            <person name="Chiba Y."/>
            <person name="Ishida S."/>
            <person name="Ono Y."/>
            <person name="Takiguchi S."/>
            <person name="Watanabe S."/>
            <person name="Yosida M."/>
            <person name="Hotuta T."/>
            <person name="Kusano J."/>
            <person name="Kanehori K."/>
            <person name="Takahashi-Fujii A."/>
            <person name="Hara H."/>
            <person name="Tanase T.-O."/>
            <person name="Nomura Y."/>
            <person name="Togiya S."/>
            <person name="Komai F."/>
            <person name="Hara R."/>
            <person name="Takeuchi K."/>
            <person name="Arita M."/>
            <person name="Imose N."/>
            <person name="Musashino K."/>
            <person name="Yuuki H."/>
            <person name="Oshima A."/>
            <person name="Sasaki N."/>
            <person name="Aotsuka S."/>
            <person name="Yoshikawa Y."/>
            <person name="Matsunawa H."/>
            <person name="Ichihara T."/>
            <person name="Shiohata N."/>
            <person name="Sano S."/>
            <person name="Moriya S."/>
            <person name="Momiyama H."/>
            <person name="Satoh N."/>
            <person name="Takami S."/>
            <person name="Terashima Y."/>
            <person name="Suzuki O."/>
            <person name="Nakagawa S."/>
            <person name="Senoh A."/>
            <person name="Mizoguchi H."/>
            <person name="Goto Y."/>
            <person name="Shimizu F."/>
            <person name="Wakebe H."/>
            <person name="Hishigaki H."/>
            <person name="Watanabe T."/>
            <person name="Sugiyama A."/>
            <person name="Takemoto M."/>
            <person name="Kawakami B."/>
            <person name="Yamazaki M."/>
            <person name="Watanabe K."/>
            <person name="Kumagai A."/>
            <person name="Itakura S."/>
            <person name="Fukuzumi Y."/>
            <person name="Fujimori Y."/>
            <person name="Komiyama M."/>
            <person name="Tashiro H."/>
            <person name="Tanigami A."/>
            <person name="Fujiwara T."/>
            <person name="Ono T."/>
            <person name="Yamada K."/>
            <person name="Fujii Y."/>
            <person name="Ozaki K."/>
            <person name="Hirao M."/>
            <person name="Ohmori Y."/>
            <person name="Kawabata A."/>
            <person name="Hikiji T."/>
            <person name="Kobatake N."/>
            <person name="Inagaki H."/>
            <person name="Ikema Y."/>
            <person name="Okamoto S."/>
            <person name="Okitani R."/>
            <person name="Kawakami T."/>
            <person name="Noguchi S."/>
            <person name="Itoh T."/>
            <person name="Shigeta K."/>
            <person name="Senba T."/>
            <person name="Matsumura K."/>
            <person name="Nakajima Y."/>
            <person name="Mizuno T."/>
            <person name="Morinaga M."/>
            <person name="Sasaki M."/>
            <person name="Togashi T."/>
            <person name="Oyama M."/>
            <person name="Hata H."/>
            <person name="Watanabe M."/>
            <person name="Komatsu T."/>
            <person name="Mizushima-Sugano J."/>
            <person name="Satoh T."/>
            <person name="Shirai Y."/>
            <person name="Takahashi Y."/>
            <person name="Nakagawa K."/>
            <person name="Okumura K."/>
            <person name="Nagase T."/>
            <person name="Nomura N."/>
            <person name="Kikuchi H."/>
            <person name="Masuho Y."/>
            <person name="Yamashita R."/>
            <person name="Nakai K."/>
            <person name="Yada T."/>
            <person name="Nakamura Y."/>
            <person name="Ohara O."/>
            <person name="Isogai T."/>
            <person name="Sugano S."/>
        </authorList>
    </citation>
    <scope>NUCLEOTIDE SEQUENCE [LARGE SCALE MRNA]</scope>
    <scope>VARIANT VAL-208</scope>
    <source>
        <tissue>Tongue</tissue>
    </source>
</reference>
<reference key="4">
    <citation type="journal article" date="2004" name="Nature">
        <title>The DNA sequence and comparative analysis of human chromosome 5.</title>
        <authorList>
            <person name="Schmutz J."/>
            <person name="Martin J."/>
            <person name="Terry A."/>
            <person name="Couronne O."/>
            <person name="Grimwood J."/>
            <person name="Lowry S."/>
            <person name="Gordon L.A."/>
            <person name="Scott D."/>
            <person name="Xie G."/>
            <person name="Huang W."/>
            <person name="Hellsten U."/>
            <person name="Tran-Gyamfi M."/>
            <person name="She X."/>
            <person name="Prabhakar S."/>
            <person name="Aerts A."/>
            <person name="Altherr M."/>
            <person name="Bajorek E."/>
            <person name="Black S."/>
            <person name="Branscomb E."/>
            <person name="Caoile C."/>
            <person name="Challacombe J.F."/>
            <person name="Chan Y.M."/>
            <person name="Denys M."/>
            <person name="Detter J.C."/>
            <person name="Escobar J."/>
            <person name="Flowers D."/>
            <person name="Fotopulos D."/>
            <person name="Glavina T."/>
            <person name="Gomez M."/>
            <person name="Gonzales E."/>
            <person name="Goodstein D."/>
            <person name="Grigoriev I."/>
            <person name="Groza M."/>
            <person name="Hammon N."/>
            <person name="Hawkins T."/>
            <person name="Haydu L."/>
            <person name="Israni S."/>
            <person name="Jett J."/>
            <person name="Kadner K."/>
            <person name="Kimball H."/>
            <person name="Kobayashi A."/>
            <person name="Lopez F."/>
            <person name="Lou Y."/>
            <person name="Martinez D."/>
            <person name="Medina C."/>
            <person name="Morgan J."/>
            <person name="Nandkeshwar R."/>
            <person name="Noonan J.P."/>
            <person name="Pitluck S."/>
            <person name="Pollard M."/>
            <person name="Predki P."/>
            <person name="Priest J."/>
            <person name="Ramirez L."/>
            <person name="Retterer J."/>
            <person name="Rodriguez A."/>
            <person name="Rogers S."/>
            <person name="Salamov A."/>
            <person name="Salazar A."/>
            <person name="Thayer N."/>
            <person name="Tice H."/>
            <person name="Tsai M."/>
            <person name="Ustaszewska A."/>
            <person name="Vo N."/>
            <person name="Wheeler J."/>
            <person name="Wu K."/>
            <person name="Yang J."/>
            <person name="Dickson M."/>
            <person name="Cheng J.-F."/>
            <person name="Eichler E.E."/>
            <person name="Olsen A."/>
            <person name="Pennacchio L.A."/>
            <person name="Rokhsar D.S."/>
            <person name="Richardson P."/>
            <person name="Lucas S.M."/>
            <person name="Myers R.M."/>
            <person name="Rubin E.M."/>
        </authorList>
    </citation>
    <scope>NUCLEOTIDE SEQUENCE [LARGE SCALE GENOMIC DNA]</scope>
</reference>
<reference key="5">
    <citation type="journal article" date="2007" name="BMC Genomics">
        <title>The full-ORF clone resource of the German cDNA consortium.</title>
        <authorList>
            <person name="Bechtel S."/>
            <person name="Rosenfelder H."/>
            <person name="Duda A."/>
            <person name="Schmidt C.P."/>
            <person name="Ernst U."/>
            <person name="Wellenreuther R."/>
            <person name="Mehrle A."/>
            <person name="Schuster C."/>
            <person name="Bahr A."/>
            <person name="Bloecker H."/>
            <person name="Heubner D."/>
            <person name="Hoerlein A."/>
            <person name="Michel G."/>
            <person name="Wedler H."/>
            <person name="Koehrer K."/>
            <person name="Ottenwaelder B."/>
            <person name="Poustka A."/>
            <person name="Wiemann S."/>
            <person name="Schupp I."/>
        </authorList>
    </citation>
    <scope>NUCLEOTIDE SEQUENCE [LARGE SCALE MRNA] OF 186-895</scope>
    <source>
        <tissue>Amygdala</tissue>
    </source>
</reference>
<reference key="6">
    <citation type="journal article" date="2011" name="Hum. Mol. Genet.">
        <title>Lack of WDR36 leads to preimplantation embryonic lethality in mice and delays the formation of small subunit ribosomal RNA in human cells in vitro.</title>
        <authorList>
            <person name="Gallenberger M."/>
            <person name="Meinel D.M."/>
            <person name="Kroeber M."/>
            <person name="Wegner M."/>
            <person name="Milkereit P."/>
            <person name="Bosl M.R."/>
            <person name="Tamm E.R."/>
        </authorList>
    </citation>
    <scope>FUNCTION</scope>
    <scope>SUBCELLULAR LOCATION</scope>
</reference>
<reference key="7">
    <citation type="journal article" date="2012" name="Mol. Cell. Proteomics">
        <title>Systematic analysis of protein pools, isoforms, and modifications affecting turnover and subcellular localization.</title>
        <authorList>
            <person name="Ahmad Y."/>
            <person name="Boisvert F.M."/>
            <person name="Lundberg E."/>
            <person name="Uhlen M."/>
            <person name="Lamond A.I."/>
        </authorList>
    </citation>
    <scope>SUBCELLULAR LOCATION [LARGE SCALE ANALYSIS]</scope>
</reference>
<reference key="8">
    <citation type="journal article" date="2005" name="Hum. Mol. Genet.">
        <title>Identification of a novel adult-onset primary open-angle glaucoma (POAG) gene on 5q22.1.</title>
        <authorList>
            <person name="Monemi S."/>
            <person name="Spaeth G."/>
            <person name="DaSilva A."/>
            <person name="Popinchalk S."/>
            <person name="Ilitchev E."/>
            <person name="Liebmann J."/>
            <person name="Ritch R."/>
            <person name="Heon E."/>
            <person name="Crick R.P."/>
            <person name="Child A."/>
            <person name="Sarfarazi M."/>
        </authorList>
    </citation>
    <scope>INVOLVEMENT IN GLC1G</scope>
    <scope>VARIANTS GLC1G PRO-160; SER-299 AND GLN-473</scope>
    <scope>VARIANTS VAL-107; VAL-208; THR-393; GLY-602 AND VAL-615</scope>
    <scope>TISSUE SPECIFICITY</scope>
</reference>
<reference key="9">
    <citation type="journal article" date="2013" name="J. Proteome Res.">
        <title>Toward a comprehensive characterization of a human cancer cell phosphoproteome.</title>
        <authorList>
            <person name="Zhou H."/>
            <person name="Di Palma S."/>
            <person name="Preisinger C."/>
            <person name="Peng M."/>
            <person name="Polat A.N."/>
            <person name="Heck A.J."/>
            <person name="Mohammed S."/>
        </authorList>
    </citation>
    <scope>PHOSPHORYLATION [LARGE SCALE ANALYSIS] AT SER-382 AND SER-399</scope>
    <scope>IDENTIFICATION BY MASS SPECTROMETRY [LARGE SCALE ANALYSIS]</scope>
    <source>
        <tissue>Erythroleukemia</tissue>
    </source>
</reference>
<reference evidence="12 13 14" key="10">
    <citation type="journal article" date="2021" name="Science">
        <title>Nucleolar maturation of the human small subunit processome.</title>
        <authorList>
            <person name="Singh S."/>
            <person name="Vanden Broeck A."/>
            <person name="Miller L."/>
            <person name="Chaker-Margot M."/>
            <person name="Klinge S."/>
        </authorList>
    </citation>
    <scope>STRUCTURE BY ELECTRON MICROSCOPY (2.70 ANGSTROMS)</scope>
    <scope>FUNCTION</scope>
    <scope>SUBUNIT</scope>
    <scope>SUBCELLULAR LOCATION</scope>
</reference>
<reference key="11">
    <citation type="journal article" date="2008" name="Invest. Ophthalmol. Vis. Sci.">
        <title>Profiling of WDR36 missense variants in German patients with glaucoma.</title>
        <authorList>
            <person name="Pasutto F."/>
            <person name="Mardin C.Y."/>
            <person name="Michels-Rautenstrauss K."/>
            <person name="Weber B.H."/>
            <person name="Sticht H."/>
            <person name="Chavarria-Soley G."/>
            <person name="Rautenstrauss B."/>
            <person name="Kruse F."/>
            <person name="Reis A."/>
        </authorList>
    </citation>
    <scope>VARIANTS VAL-107; PRO-156; VAL-208; THR-393 AND GLY-602</scope>
    <scope>VARIANTS GLC1G CYS-41; ALA-347; LEU-355; TYR-355 AND ARG-431</scope>
</reference>
<gene>
    <name evidence="11" type="primary">WDR36</name>
</gene>
<protein>
    <recommendedName>
        <fullName>WD repeat-containing protein 36</fullName>
    </recommendedName>
    <alternativeName>
        <fullName>T-cell activation WD repeat-containing protein</fullName>
        <shortName>TA-WDRP</shortName>
    </alternativeName>
</protein>
<feature type="chain" id="PRO_0000051386" description="WD repeat-containing protein 36">
    <location>
        <begin position="1"/>
        <end position="895"/>
    </location>
</feature>
<feature type="repeat" description="WD 1">
    <location>
        <begin position="30"/>
        <end position="63"/>
    </location>
</feature>
<feature type="repeat" description="WD 2">
    <location>
        <begin position="72"/>
        <end position="101"/>
    </location>
</feature>
<feature type="repeat" description="WD 3">
    <location>
        <begin position="110"/>
        <end position="143"/>
    </location>
</feature>
<feature type="repeat" description="WD 4">
    <location>
        <begin position="152"/>
        <end position="186"/>
    </location>
</feature>
<feature type="repeat" description="WD 5">
    <location>
        <begin position="193"/>
        <end position="230"/>
    </location>
</feature>
<feature type="repeat" description="WD 6">
    <location>
        <begin position="237"/>
        <end position="272"/>
    </location>
</feature>
<feature type="repeat" description="WD 7">
    <location>
        <begin position="277"/>
        <end position="320"/>
    </location>
</feature>
<feature type="repeat" description="WD 8">
    <location>
        <begin position="327"/>
        <end position="361"/>
    </location>
</feature>
<feature type="repeat" description="WD 9">
    <location>
        <begin position="389"/>
        <end position="428"/>
    </location>
</feature>
<feature type="repeat" description="WD 10">
    <location>
        <begin position="441"/>
        <end position="475"/>
    </location>
</feature>
<feature type="repeat" description="WD 11">
    <location>
        <begin position="486"/>
        <end position="522"/>
    </location>
</feature>
<feature type="repeat" description="WD 12">
    <location>
        <begin position="527"/>
        <end position="562"/>
    </location>
</feature>
<feature type="repeat" description="WD 13">
    <location>
        <begin position="564"/>
        <end position="605"/>
    </location>
</feature>
<feature type="repeat" description="WD 14">
    <location>
        <begin position="607"/>
        <end position="645"/>
    </location>
</feature>
<feature type="modified residue" description="Phosphoserine" evidence="15">
    <location>
        <position position="382"/>
    </location>
</feature>
<feature type="modified residue" description="Phosphoserine" evidence="15">
    <location>
        <position position="399"/>
    </location>
</feature>
<feature type="sequence variant" id="VAR_077610" description="In GLC1G; uncertain significance; dbSNP:rs549211166." evidence="5">
    <original>Y</original>
    <variation>C</variation>
    <location>
        <position position="41"/>
    </location>
</feature>
<feature type="sequence variant" id="VAR_025964" description="In dbSNP:rs62376783." evidence="4 5">
    <original>A</original>
    <variation>V</variation>
    <location>
        <position position="107"/>
    </location>
</feature>
<feature type="sequence variant" id="VAR_077611" description="In dbSNP:rs142088179." evidence="5">
    <original>H</original>
    <variation>P</variation>
    <location>
        <position position="156"/>
    </location>
</feature>
<feature type="sequence variant" id="VAR_025965" description="In GLC1G; uncertain significance; requires 2 nucleotide substitutions." evidence="4">
    <original>Y</original>
    <variation>P</variation>
    <location>
        <position position="160"/>
    </location>
</feature>
<feature type="sequence variant" id="VAR_024700" description="In dbSNP:rs11241095." evidence="2 4 5">
    <original>I</original>
    <variation>V</variation>
    <location>
        <position position="208"/>
    </location>
</feature>
<feature type="sequence variant" id="VAR_025966" description="In GLC1G; dbSNP:rs118204022." evidence="4">
    <original>N</original>
    <variation>S</variation>
    <location>
        <position position="299"/>
    </location>
</feature>
<feature type="sequence variant" id="VAR_077612" description="In GLC1G; uncertain significance; dbSNP:rs771276992." evidence="5">
    <original>T</original>
    <variation>A</variation>
    <location>
        <position position="347"/>
    </location>
</feature>
<feature type="sequence variant" id="VAR_077613" description="In GLC1G; uncertain significance." evidence="5">
    <original>H</original>
    <variation>L</variation>
    <location>
        <position position="355"/>
    </location>
</feature>
<feature type="sequence variant" id="VAR_077614" description="In GLC1G; uncertain significance." evidence="5">
    <original>H</original>
    <variation>Y</variation>
    <location>
        <position position="355"/>
    </location>
</feature>
<feature type="sequence variant" id="VAR_025967" description="In dbSNP:rs35703638." evidence="4 5">
    <original>A</original>
    <variation>T</variation>
    <location>
        <position position="393"/>
    </location>
</feature>
<feature type="sequence variant" id="VAR_053430" description="In dbSNP:rs17623803.">
    <original>E</original>
    <variation>Q</variation>
    <location>
        <position position="398"/>
    </location>
</feature>
<feature type="sequence variant" id="VAR_077615" description="In GLC1G; uncertain significance; dbSNP:rs372059163." evidence="5">
    <original>P</original>
    <variation>R</variation>
    <location>
        <position position="431"/>
    </location>
</feature>
<feature type="sequence variant" id="VAR_025968" description="In GLC1G; dbSNP:rs116529882." evidence="4">
    <original>R</original>
    <variation>Q</variation>
    <location>
        <position position="473"/>
    </location>
</feature>
<feature type="sequence variant" id="VAR_025969" description="In dbSNP:rs34595252." evidence="4 5">
    <original>D</original>
    <variation>G</variation>
    <location>
        <position position="602"/>
    </location>
</feature>
<feature type="sequence variant" id="VAR_025970" description="In dbSNP:rs11956837." evidence="4">
    <original>M</original>
    <variation>V</variation>
    <location>
        <position position="615"/>
    </location>
</feature>
<feature type="sequence conflict" description="In Ref. 5; CAH18068." evidence="9" ref="5">
    <original>L</original>
    <variation>P</variation>
    <location>
        <position position="315"/>
    </location>
</feature>
<feature type="sequence conflict" description="In Ref. 5; CAH18068." evidence="9" ref="5">
    <original>L</original>
    <variation>P</variation>
    <location>
        <position position="630"/>
    </location>
</feature>
<feature type="sequence conflict" description="In Ref. 5; CAH18068." evidence="9" ref="5">
    <original>I</original>
    <variation>T</variation>
    <location>
        <position position="862"/>
    </location>
</feature>
<organism>
    <name type="scientific">Homo sapiens</name>
    <name type="common">Human</name>
    <dbReference type="NCBI Taxonomy" id="9606"/>
    <lineage>
        <taxon>Eukaryota</taxon>
        <taxon>Metazoa</taxon>
        <taxon>Chordata</taxon>
        <taxon>Craniata</taxon>
        <taxon>Vertebrata</taxon>
        <taxon>Euteleostomi</taxon>
        <taxon>Mammalia</taxon>
        <taxon>Eutheria</taxon>
        <taxon>Euarchontoglires</taxon>
        <taxon>Primates</taxon>
        <taxon>Haplorrhini</taxon>
        <taxon>Catarrhini</taxon>
        <taxon>Hominidae</taxon>
        <taxon>Homo</taxon>
    </lineage>
</organism>
<sequence>MERASERRTASALFAGFRALGLFSNDIPHVVRFSALKRRFYVTTCVGKSFHTYDVQKLSLVAVSNSVPQDICCMAADGRLVFAAYGNVFSAFARNKEIVHTFKGHKAEIHFLQPFGDHIISVDTDGILIIWHIYSEEEYLQLTFDKSVFKISAILHPSTYLNKILLGSEQGSLQLWNVKSNKLLYTFPGWKVGVTALQQAPAVDVVAIGLMSGQVIIHNIKFNETLMKFRQDWGPITSISFRTDGHPVMAAGSPCGHIGLWDLEDKKLINQMRNAHSTAIAGLTFLHREPLLVTNGADNALRIWIFDGPTGEGRLLRFRMGHSAPLTNIRYYGQNGQQILSASQDGTLQSFSTVHEKFNKSLGHGLINKKRVKRKGLQNTMSVRLPPITKFAAEEARESDWDGIIACHQGKLSCSTWNYQKSTIGAYFLKPKELKKDDITATAVDITSCGNFAVIGLSSGTVDVYNMQSGIHRGSFGKDQAHKGSVRGVAVDGLNQLTVTTGSEGLLKFWNFKNKILIHSVSLSSSPNIMLLHRDSGILGLALDDFSISVLDIETRKIVREFSGHQGQINDMAFSPDGRWLISAAMDCSIRTWDLPSGCLIDCFLLDSAPLNVSMSPTGDFLATSHVDHLGIYLWSNISLYSVVSLRPLPADYVPSIVMLPGTCQTQDVEVSEETVEPSDELIEYDSPEQLNEQLVTLSLLPESRWKNLLNLDVIKKKNKPKEPPKVPKSAPFFIPTIPGLVPRYAAPEQNNDPQQSKVVNLGVLAQKSDFCLKLEEGLVNNKYDTALNLLKESGPSGIETELRSLSPDCGGSIEVMQSFLKMIGMMLDRKRDFELAQAYLALFLKLHLKMLPSEPVLLEEITNLSSQVEENWTHLQSLFNQSMCILNYLKSALL</sequence>